<comment type="function">
    <text evidence="1">Catalyzes the condensation reaction of fatty acid synthesis by the addition to an acyl acceptor of two carbons from malonyl-ACP. Catalyzes the first condensation reaction which initiates fatty acid synthesis and may therefore play a role in governing the total rate of fatty acid production. Possesses both acetoacetyl-ACP synthase and acetyl transacylase activities. Its substrate specificity determines the biosynthesis of branched-chain and/or straight-chain of fatty acids.</text>
</comment>
<comment type="catalytic activity">
    <reaction evidence="1">
        <text>malonyl-[ACP] + acetyl-CoA + H(+) = 3-oxobutanoyl-[ACP] + CO2 + CoA</text>
        <dbReference type="Rhea" id="RHEA:12080"/>
        <dbReference type="Rhea" id="RHEA-COMP:9623"/>
        <dbReference type="Rhea" id="RHEA-COMP:9625"/>
        <dbReference type="ChEBI" id="CHEBI:15378"/>
        <dbReference type="ChEBI" id="CHEBI:16526"/>
        <dbReference type="ChEBI" id="CHEBI:57287"/>
        <dbReference type="ChEBI" id="CHEBI:57288"/>
        <dbReference type="ChEBI" id="CHEBI:78449"/>
        <dbReference type="ChEBI" id="CHEBI:78450"/>
        <dbReference type="EC" id="2.3.1.180"/>
    </reaction>
</comment>
<comment type="pathway">
    <text evidence="1">Lipid metabolism; fatty acid biosynthesis.</text>
</comment>
<comment type="subunit">
    <text evidence="1">Homodimer.</text>
</comment>
<comment type="subcellular location">
    <subcellularLocation>
        <location evidence="1">Cytoplasm</location>
    </subcellularLocation>
</comment>
<comment type="domain">
    <text evidence="1">The last Arg residue of the ACP-binding site is essential for the weak association between ACP/AcpP and FabH.</text>
</comment>
<comment type="similarity">
    <text evidence="1">Belongs to the thiolase-like superfamily. FabH family.</text>
</comment>
<gene>
    <name evidence="1" type="primary">fabH</name>
    <name type="ordered locus">TM1040_0914</name>
</gene>
<sequence length="323" mass="34239">MTRRAVVIGAGHYLPDRIVENAEFEATLDTSDEWIRSRSGIERRHFAAEGETTSHMATRAAEAALKSAGRSADDVDAIVLATSTADLTFPSAATMVQSQLGMTKGFAFDVQAVCAGFVYALSNANALIASGQADRVLVIGAETFSRIMDWTDRSTCVLFGDGAGALLLEAQEGEGTSKDRGILATDLNSDGRYKDLLYVDGGVSTQSTGYLRMQGNQVFRHAVEKLASTAHTALERAGASTDEVDWIVPHQANIRIIQGTAKKMGLPMDKVVVTVQDHGNTSAASIPLALSVGVERGQIKPGDLIVTEAIGGGLAWGAVVLRW</sequence>
<accession>Q1GI69</accession>
<proteinExistence type="inferred from homology"/>
<dbReference type="EC" id="2.3.1.180" evidence="1"/>
<dbReference type="EMBL" id="CP000377">
    <property type="protein sequence ID" value="ABF63647.1"/>
    <property type="molecule type" value="Genomic_DNA"/>
</dbReference>
<dbReference type="RefSeq" id="WP_011538258.1">
    <property type="nucleotide sequence ID" value="NC_008044.1"/>
</dbReference>
<dbReference type="SMR" id="Q1GI69"/>
<dbReference type="STRING" id="292414.TM1040_0914"/>
<dbReference type="KEGG" id="sit:TM1040_0914"/>
<dbReference type="eggNOG" id="COG0332">
    <property type="taxonomic scope" value="Bacteria"/>
</dbReference>
<dbReference type="HOGENOM" id="CLU_039592_3_1_5"/>
<dbReference type="OrthoDB" id="9815506at2"/>
<dbReference type="UniPathway" id="UPA00094"/>
<dbReference type="Proteomes" id="UP000000636">
    <property type="component" value="Chromosome"/>
</dbReference>
<dbReference type="GO" id="GO:0005737">
    <property type="term" value="C:cytoplasm"/>
    <property type="evidence" value="ECO:0007669"/>
    <property type="project" value="UniProtKB-SubCell"/>
</dbReference>
<dbReference type="GO" id="GO:0004315">
    <property type="term" value="F:3-oxoacyl-[acyl-carrier-protein] synthase activity"/>
    <property type="evidence" value="ECO:0007669"/>
    <property type="project" value="InterPro"/>
</dbReference>
<dbReference type="GO" id="GO:0033818">
    <property type="term" value="F:beta-ketoacyl-acyl-carrier-protein synthase III activity"/>
    <property type="evidence" value="ECO:0007669"/>
    <property type="project" value="UniProtKB-UniRule"/>
</dbReference>
<dbReference type="GO" id="GO:0006633">
    <property type="term" value="P:fatty acid biosynthetic process"/>
    <property type="evidence" value="ECO:0007669"/>
    <property type="project" value="UniProtKB-UniRule"/>
</dbReference>
<dbReference type="GO" id="GO:0044550">
    <property type="term" value="P:secondary metabolite biosynthetic process"/>
    <property type="evidence" value="ECO:0007669"/>
    <property type="project" value="TreeGrafter"/>
</dbReference>
<dbReference type="CDD" id="cd00830">
    <property type="entry name" value="KAS_III"/>
    <property type="match status" value="1"/>
</dbReference>
<dbReference type="FunFam" id="3.40.47.10:FF:000004">
    <property type="entry name" value="3-oxoacyl-[acyl-carrier-protein] synthase 3"/>
    <property type="match status" value="1"/>
</dbReference>
<dbReference type="Gene3D" id="3.40.47.10">
    <property type="match status" value="1"/>
</dbReference>
<dbReference type="HAMAP" id="MF_01815">
    <property type="entry name" value="FabH"/>
    <property type="match status" value="1"/>
</dbReference>
<dbReference type="InterPro" id="IPR013747">
    <property type="entry name" value="ACP_syn_III_C"/>
</dbReference>
<dbReference type="InterPro" id="IPR013751">
    <property type="entry name" value="ACP_syn_III_N"/>
</dbReference>
<dbReference type="InterPro" id="IPR004655">
    <property type="entry name" value="FabH"/>
</dbReference>
<dbReference type="InterPro" id="IPR016039">
    <property type="entry name" value="Thiolase-like"/>
</dbReference>
<dbReference type="NCBIfam" id="TIGR00747">
    <property type="entry name" value="fabH"/>
    <property type="match status" value="1"/>
</dbReference>
<dbReference type="NCBIfam" id="NF006829">
    <property type="entry name" value="PRK09352.1"/>
    <property type="match status" value="1"/>
</dbReference>
<dbReference type="PANTHER" id="PTHR34069">
    <property type="entry name" value="3-OXOACYL-[ACYL-CARRIER-PROTEIN] SYNTHASE 3"/>
    <property type="match status" value="1"/>
</dbReference>
<dbReference type="PANTHER" id="PTHR34069:SF2">
    <property type="entry name" value="BETA-KETOACYL-[ACYL-CARRIER-PROTEIN] SYNTHASE III"/>
    <property type="match status" value="1"/>
</dbReference>
<dbReference type="Pfam" id="PF08545">
    <property type="entry name" value="ACP_syn_III"/>
    <property type="match status" value="1"/>
</dbReference>
<dbReference type="Pfam" id="PF08541">
    <property type="entry name" value="ACP_syn_III_C"/>
    <property type="match status" value="1"/>
</dbReference>
<dbReference type="SUPFAM" id="SSF53901">
    <property type="entry name" value="Thiolase-like"/>
    <property type="match status" value="1"/>
</dbReference>
<evidence type="ECO:0000255" key="1">
    <source>
        <dbReference type="HAMAP-Rule" id="MF_01815"/>
    </source>
</evidence>
<name>FABH_RUEST</name>
<organism>
    <name type="scientific">Ruegeria sp. (strain TM1040)</name>
    <name type="common">Silicibacter sp.</name>
    <dbReference type="NCBI Taxonomy" id="292414"/>
    <lineage>
        <taxon>Bacteria</taxon>
        <taxon>Pseudomonadati</taxon>
        <taxon>Pseudomonadota</taxon>
        <taxon>Alphaproteobacteria</taxon>
        <taxon>Rhodobacterales</taxon>
        <taxon>Roseobacteraceae</taxon>
        <taxon>Ruegeria</taxon>
    </lineage>
</organism>
<feature type="chain" id="PRO_1000056411" description="Beta-ketoacyl-[acyl-carrier-protein] synthase III">
    <location>
        <begin position="1"/>
        <end position="323"/>
    </location>
</feature>
<feature type="region of interest" description="ACP-binding" evidence="1">
    <location>
        <begin position="251"/>
        <end position="255"/>
    </location>
</feature>
<feature type="active site" evidence="1">
    <location>
        <position position="114"/>
    </location>
</feature>
<feature type="active site" evidence="1">
    <location>
        <position position="250"/>
    </location>
</feature>
<feature type="active site" evidence="1">
    <location>
        <position position="280"/>
    </location>
</feature>
<protein>
    <recommendedName>
        <fullName evidence="1">Beta-ketoacyl-[acyl-carrier-protein] synthase III</fullName>
        <shortName evidence="1">Beta-ketoacyl-ACP synthase III</shortName>
        <shortName evidence="1">KAS III</shortName>
        <ecNumber evidence="1">2.3.1.180</ecNumber>
    </recommendedName>
    <alternativeName>
        <fullName evidence="1">3-oxoacyl-[acyl-carrier-protein] synthase 3</fullName>
    </alternativeName>
    <alternativeName>
        <fullName evidence="1">3-oxoacyl-[acyl-carrier-protein] synthase III</fullName>
    </alternativeName>
</protein>
<reference key="1">
    <citation type="submission" date="2006-05" db="EMBL/GenBank/DDBJ databases">
        <title>Complete sequence of chromosome of Silicibacter sp. TM1040.</title>
        <authorList>
            <consortium name="US DOE Joint Genome Institute"/>
            <person name="Copeland A."/>
            <person name="Lucas S."/>
            <person name="Lapidus A."/>
            <person name="Barry K."/>
            <person name="Detter J.C."/>
            <person name="Glavina del Rio T."/>
            <person name="Hammon N."/>
            <person name="Israni S."/>
            <person name="Dalin E."/>
            <person name="Tice H."/>
            <person name="Pitluck S."/>
            <person name="Brettin T."/>
            <person name="Bruce D."/>
            <person name="Han C."/>
            <person name="Tapia R."/>
            <person name="Goodwin L."/>
            <person name="Thompson L.S."/>
            <person name="Gilna P."/>
            <person name="Schmutz J."/>
            <person name="Larimer F."/>
            <person name="Land M."/>
            <person name="Hauser L."/>
            <person name="Kyrpides N."/>
            <person name="Kim E."/>
            <person name="Belas R."/>
            <person name="Moran M.A."/>
            <person name="Buchan A."/>
            <person name="Gonzalez J.M."/>
            <person name="Schell M.A."/>
            <person name="Sun F."/>
            <person name="Richardson P."/>
        </authorList>
    </citation>
    <scope>NUCLEOTIDE SEQUENCE [LARGE SCALE GENOMIC DNA]</scope>
    <source>
        <strain>TM1040</strain>
    </source>
</reference>
<keyword id="KW-0012">Acyltransferase</keyword>
<keyword id="KW-0963">Cytoplasm</keyword>
<keyword id="KW-0275">Fatty acid biosynthesis</keyword>
<keyword id="KW-0276">Fatty acid metabolism</keyword>
<keyword id="KW-0444">Lipid biosynthesis</keyword>
<keyword id="KW-0443">Lipid metabolism</keyword>
<keyword id="KW-0511">Multifunctional enzyme</keyword>
<keyword id="KW-1185">Reference proteome</keyword>
<keyword id="KW-0808">Transferase</keyword>